<accession>A4XTZ3</accession>
<keyword id="KW-0028">Amino-acid biosynthesis</keyword>
<keyword id="KW-0368">Histidine biosynthesis</keyword>
<keyword id="KW-0378">Hydrolase</keyword>
<keyword id="KW-0486">Methionine biosynthesis</keyword>
<keyword id="KW-0511">Multifunctional enzyme</keyword>
<keyword id="KW-0521">NADP</keyword>
<keyword id="KW-0554">One-carbon metabolism</keyword>
<keyword id="KW-0560">Oxidoreductase</keyword>
<keyword id="KW-0658">Purine biosynthesis</keyword>
<evidence type="ECO:0000255" key="1">
    <source>
        <dbReference type="HAMAP-Rule" id="MF_01576"/>
    </source>
</evidence>
<name>FOLD1_ECTM1</name>
<feature type="chain" id="PRO_0000340587" description="Bifunctional protein FolD 1">
    <location>
        <begin position="1"/>
        <end position="284"/>
    </location>
</feature>
<feature type="binding site" evidence="1">
    <location>
        <begin position="166"/>
        <end position="168"/>
    </location>
    <ligand>
        <name>NADP(+)</name>
        <dbReference type="ChEBI" id="CHEBI:58349"/>
    </ligand>
</feature>
<feature type="binding site" evidence="1">
    <location>
        <position position="232"/>
    </location>
    <ligand>
        <name>NADP(+)</name>
        <dbReference type="ChEBI" id="CHEBI:58349"/>
    </ligand>
</feature>
<comment type="function">
    <text evidence="1">Catalyzes the oxidation of 5,10-methylenetetrahydrofolate to 5,10-methenyltetrahydrofolate and then the hydrolysis of 5,10-methenyltetrahydrofolate to 10-formyltetrahydrofolate.</text>
</comment>
<comment type="catalytic activity">
    <reaction evidence="1">
        <text>(6R)-5,10-methylene-5,6,7,8-tetrahydrofolate + NADP(+) = (6R)-5,10-methenyltetrahydrofolate + NADPH</text>
        <dbReference type="Rhea" id="RHEA:22812"/>
        <dbReference type="ChEBI" id="CHEBI:15636"/>
        <dbReference type="ChEBI" id="CHEBI:57455"/>
        <dbReference type="ChEBI" id="CHEBI:57783"/>
        <dbReference type="ChEBI" id="CHEBI:58349"/>
        <dbReference type="EC" id="1.5.1.5"/>
    </reaction>
</comment>
<comment type="catalytic activity">
    <reaction evidence="1">
        <text>(6R)-5,10-methenyltetrahydrofolate + H2O = (6R)-10-formyltetrahydrofolate + H(+)</text>
        <dbReference type="Rhea" id="RHEA:23700"/>
        <dbReference type="ChEBI" id="CHEBI:15377"/>
        <dbReference type="ChEBI" id="CHEBI:15378"/>
        <dbReference type="ChEBI" id="CHEBI:57455"/>
        <dbReference type="ChEBI" id="CHEBI:195366"/>
        <dbReference type="EC" id="3.5.4.9"/>
    </reaction>
</comment>
<comment type="pathway">
    <text evidence="1">One-carbon metabolism; tetrahydrofolate interconversion.</text>
</comment>
<comment type="subunit">
    <text evidence="1">Homodimer.</text>
</comment>
<comment type="similarity">
    <text evidence="1">Belongs to the tetrahydrofolate dehydrogenase/cyclohydrolase family.</text>
</comment>
<reference key="1">
    <citation type="submission" date="2007-04" db="EMBL/GenBank/DDBJ databases">
        <title>Complete sequence of Pseudomonas mendocina ymp.</title>
        <authorList>
            <consortium name="US DOE Joint Genome Institute"/>
            <person name="Copeland A."/>
            <person name="Lucas S."/>
            <person name="Lapidus A."/>
            <person name="Barry K."/>
            <person name="Glavina del Rio T."/>
            <person name="Dalin E."/>
            <person name="Tice H."/>
            <person name="Pitluck S."/>
            <person name="Kiss H."/>
            <person name="Brettin T."/>
            <person name="Detter J.C."/>
            <person name="Bruce D."/>
            <person name="Han C."/>
            <person name="Schmutz J."/>
            <person name="Larimer F."/>
            <person name="Land M."/>
            <person name="Hauser L."/>
            <person name="Kyrpides N."/>
            <person name="Mikhailova N."/>
            <person name="Hersman L."/>
            <person name="Dubois J."/>
            <person name="Maurice P."/>
            <person name="Richardson P."/>
        </authorList>
    </citation>
    <scope>NUCLEOTIDE SEQUENCE [LARGE SCALE GENOMIC DNA]</scope>
    <source>
        <strain>ymp</strain>
    </source>
</reference>
<gene>
    <name evidence="1" type="primary">folD1</name>
    <name type="ordered locus">Pmen_2048</name>
</gene>
<organism>
    <name type="scientific">Ectopseudomonas mendocina (strain ymp)</name>
    <name type="common">Pseudomonas mendocina</name>
    <dbReference type="NCBI Taxonomy" id="399739"/>
    <lineage>
        <taxon>Bacteria</taxon>
        <taxon>Pseudomonadati</taxon>
        <taxon>Pseudomonadota</taxon>
        <taxon>Gammaproteobacteria</taxon>
        <taxon>Pseudomonadales</taxon>
        <taxon>Pseudomonadaceae</taxon>
        <taxon>Ectopseudomonas</taxon>
    </lineage>
</organism>
<dbReference type="EC" id="1.5.1.5" evidence="1"/>
<dbReference type="EC" id="3.5.4.9" evidence="1"/>
<dbReference type="EMBL" id="CP000680">
    <property type="protein sequence ID" value="ABP84809.1"/>
    <property type="molecule type" value="Genomic_DNA"/>
</dbReference>
<dbReference type="SMR" id="A4XTZ3"/>
<dbReference type="STRING" id="399739.Pmen_2048"/>
<dbReference type="KEGG" id="pmy:Pmen_2048"/>
<dbReference type="PATRIC" id="fig|399739.8.peg.2077"/>
<dbReference type="eggNOG" id="COG0190">
    <property type="taxonomic scope" value="Bacteria"/>
</dbReference>
<dbReference type="HOGENOM" id="CLU_034045_2_1_6"/>
<dbReference type="OrthoDB" id="9803580at2"/>
<dbReference type="UniPathway" id="UPA00193"/>
<dbReference type="GO" id="GO:0005829">
    <property type="term" value="C:cytosol"/>
    <property type="evidence" value="ECO:0007669"/>
    <property type="project" value="TreeGrafter"/>
</dbReference>
<dbReference type="GO" id="GO:0004477">
    <property type="term" value="F:methenyltetrahydrofolate cyclohydrolase activity"/>
    <property type="evidence" value="ECO:0007669"/>
    <property type="project" value="UniProtKB-UniRule"/>
</dbReference>
<dbReference type="GO" id="GO:0004488">
    <property type="term" value="F:methylenetetrahydrofolate dehydrogenase (NADP+) activity"/>
    <property type="evidence" value="ECO:0007669"/>
    <property type="project" value="UniProtKB-UniRule"/>
</dbReference>
<dbReference type="GO" id="GO:0000105">
    <property type="term" value="P:L-histidine biosynthetic process"/>
    <property type="evidence" value="ECO:0007669"/>
    <property type="project" value="UniProtKB-KW"/>
</dbReference>
<dbReference type="GO" id="GO:0009086">
    <property type="term" value="P:methionine biosynthetic process"/>
    <property type="evidence" value="ECO:0007669"/>
    <property type="project" value="UniProtKB-KW"/>
</dbReference>
<dbReference type="GO" id="GO:0006164">
    <property type="term" value="P:purine nucleotide biosynthetic process"/>
    <property type="evidence" value="ECO:0007669"/>
    <property type="project" value="UniProtKB-KW"/>
</dbReference>
<dbReference type="GO" id="GO:0035999">
    <property type="term" value="P:tetrahydrofolate interconversion"/>
    <property type="evidence" value="ECO:0007669"/>
    <property type="project" value="UniProtKB-UniRule"/>
</dbReference>
<dbReference type="CDD" id="cd01080">
    <property type="entry name" value="NAD_bind_m-THF_DH_Cyclohyd"/>
    <property type="match status" value="1"/>
</dbReference>
<dbReference type="FunFam" id="3.40.50.10860:FF:000001">
    <property type="entry name" value="Bifunctional protein FolD"/>
    <property type="match status" value="1"/>
</dbReference>
<dbReference type="FunFam" id="3.40.50.720:FF:000006">
    <property type="entry name" value="Bifunctional protein FolD"/>
    <property type="match status" value="1"/>
</dbReference>
<dbReference type="Gene3D" id="3.40.50.10860">
    <property type="entry name" value="Leucine Dehydrogenase, chain A, domain 1"/>
    <property type="match status" value="1"/>
</dbReference>
<dbReference type="Gene3D" id="3.40.50.720">
    <property type="entry name" value="NAD(P)-binding Rossmann-like Domain"/>
    <property type="match status" value="1"/>
</dbReference>
<dbReference type="HAMAP" id="MF_01576">
    <property type="entry name" value="THF_DHG_CYH"/>
    <property type="match status" value="1"/>
</dbReference>
<dbReference type="InterPro" id="IPR046346">
    <property type="entry name" value="Aminoacid_DH-like_N_sf"/>
</dbReference>
<dbReference type="InterPro" id="IPR036291">
    <property type="entry name" value="NAD(P)-bd_dom_sf"/>
</dbReference>
<dbReference type="InterPro" id="IPR000672">
    <property type="entry name" value="THF_DH/CycHdrlase"/>
</dbReference>
<dbReference type="InterPro" id="IPR020630">
    <property type="entry name" value="THF_DH/CycHdrlase_cat_dom"/>
</dbReference>
<dbReference type="InterPro" id="IPR020867">
    <property type="entry name" value="THF_DH/CycHdrlase_CS"/>
</dbReference>
<dbReference type="InterPro" id="IPR020631">
    <property type="entry name" value="THF_DH/CycHdrlase_NAD-bd_dom"/>
</dbReference>
<dbReference type="NCBIfam" id="NF008058">
    <property type="entry name" value="PRK10792.1"/>
    <property type="match status" value="1"/>
</dbReference>
<dbReference type="NCBIfam" id="NF010783">
    <property type="entry name" value="PRK14186.1"/>
    <property type="match status" value="1"/>
</dbReference>
<dbReference type="PANTHER" id="PTHR48099:SF5">
    <property type="entry name" value="C-1-TETRAHYDROFOLATE SYNTHASE, CYTOPLASMIC"/>
    <property type="match status" value="1"/>
</dbReference>
<dbReference type="PANTHER" id="PTHR48099">
    <property type="entry name" value="C-1-TETRAHYDROFOLATE SYNTHASE, CYTOPLASMIC-RELATED"/>
    <property type="match status" value="1"/>
</dbReference>
<dbReference type="Pfam" id="PF00763">
    <property type="entry name" value="THF_DHG_CYH"/>
    <property type="match status" value="1"/>
</dbReference>
<dbReference type="Pfam" id="PF02882">
    <property type="entry name" value="THF_DHG_CYH_C"/>
    <property type="match status" value="1"/>
</dbReference>
<dbReference type="PRINTS" id="PR00085">
    <property type="entry name" value="THFDHDRGNASE"/>
</dbReference>
<dbReference type="SUPFAM" id="SSF53223">
    <property type="entry name" value="Aminoacid dehydrogenase-like, N-terminal domain"/>
    <property type="match status" value="1"/>
</dbReference>
<dbReference type="SUPFAM" id="SSF51735">
    <property type="entry name" value="NAD(P)-binding Rossmann-fold domains"/>
    <property type="match status" value="1"/>
</dbReference>
<dbReference type="PROSITE" id="PS00766">
    <property type="entry name" value="THF_DHG_CYH_1"/>
    <property type="match status" value="1"/>
</dbReference>
<proteinExistence type="inferred from homology"/>
<protein>
    <recommendedName>
        <fullName evidence="1">Bifunctional protein FolD 1</fullName>
    </recommendedName>
    <domain>
        <recommendedName>
            <fullName evidence="1">Methylenetetrahydrofolate dehydrogenase</fullName>
            <ecNumber evidence="1">1.5.1.5</ecNumber>
        </recommendedName>
    </domain>
    <domain>
        <recommendedName>
            <fullName evidence="1">Methenyltetrahydrofolate cyclohydrolase</fullName>
            <ecNumber evidence="1">3.5.4.9</ecNumber>
        </recommendedName>
    </domain>
</protein>
<sequence>MTAQLIDGKAIAASLRQQIAQRVAERRQQGLRAPGLAVILVGTDPASQVYVSHKRKDCEEVGFLSRAYDLPAETSQADLLALIDELNEDPTIDGILVQLPLPEHLDSSLLLERIRPDKDVDGFHPYNIGRLAQRMPLLRPCTPKGIMTLLESTGADLYGMHAVVVGASNIVGRPMAMELLLAGCTVTVTHRFTKDLAGHVGQADIVVVAAGKPGLVKGEWIKEGAIVIDVGINRQEDGKLVGDVVYETALPRAGWITPVPGGVGPMTRAGLLENTLHAAEHLHK</sequence>